<feature type="chain" id="PRO_0000275641" description="Photosystem I assembly protein Ycf3">
    <location>
        <begin position="1"/>
        <end position="167"/>
    </location>
</feature>
<feature type="repeat" description="TPR 1">
    <location>
        <begin position="35"/>
        <end position="68"/>
    </location>
</feature>
<feature type="repeat" description="TPR 2">
    <location>
        <begin position="72"/>
        <end position="105"/>
    </location>
</feature>
<feature type="repeat" description="TPR 3">
    <location>
        <begin position="120"/>
        <end position="153"/>
    </location>
</feature>
<keyword id="KW-0150">Chloroplast</keyword>
<keyword id="KW-0472">Membrane</keyword>
<keyword id="KW-0602">Photosynthesis</keyword>
<keyword id="KW-0934">Plastid</keyword>
<keyword id="KW-0677">Repeat</keyword>
<keyword id="KW-0793">Thylakoid</keyword>
<keyword id="KW-0802">TPR repeat</keyword>
<comment type="function">
    <text evidence="1">Essential for the assembly of the photosystem I (PSI) complex. May act as a chaperone-like factor to guide the assembly of the PSI subunits.</text>
</comment>
<comment type="subcellular location">
    <subcellularLocation>
        <location evidence="1">Plastid</location>
        <location evidence="1">Chloroplast thylakoid membrane</location>
        <topology evidence="1">Peripheral membrane protein</topology>
    </subcellularLocation>
</comment>
<comment type="similarity">
    <text evidence="1">Belongs to the Ycf3 family.</text>
</comment>
<reference key="1">
    <citation type="journal article" date="2006" name="Mol. Genet. Genomics">
        <title>Distinctive architecture of the chloroplast genome in the chlorophycean green alga Stigeoclonium helveticum.</title>
        <authorList>
            <person name="Belanger A.-S."/>
            <person name="Brouard J.-S."/>
            <person name="Charlebois P."/>
            <person name="Otis C."/>
            <person name="Lemieux C."/>
            <person name="Turmel M."/>
        </authorList>
    </citation>
    <scope>NUCLEOTIDE SEQUENCE [LARGE SCALE GENOMIC DNA]</scope>
    <source>
        <strain>UTEX 441</strain>
    </source>
</reference>
<sequence>MPRSQRNDNFIDKTFTVVADILLKVLPTSQREKRAFAYYRDGMSAQSEGEYAEALQNYYEAMRLEVDAYDRSYILYNIGLIHTSNGEHARALEYYYQALERNPSLPSALNNIAVIYHYRGEQAIEKGQAEISSLLFDKAADYWKEAIRLAPTNYIEAQNWLKMTGRA</sequence>
<evidence type="ECO:0000255" key="1">
    <source>
        <dbReference type="HAMAP-Rule" id="MF_00439"/>
    </source>
</evidence>
<protein>
    <recommendedName>
        <fullName evidence="1">Photosystem I assembly protein Ycf3</fullName>
    </recommendedName>
</protein>
<geneLocation type="chloroplast"/>
<organism>
    <name type="scientific">Stigeoclonium helveticum</name>
    <name type="common">Green alga</name>
    <dbReference type="NCBI Taxonomy" id="55999"/>
    <lineage>
        <taxon>Eukaryota</taxon>
        <taxon>Viridiplantae</taxon>
        <taxon>Chlorophyta</taxon>
        <taxon>core chlorophytes</taxon>
        <taxon>Chlorophyceae</taxon>
        <taxon>OCC clade</taxon>
        <taxon>Chaetophorales</taxon>
        <taxon>Chaetophoraceae</taxon>
        <taxon>Stigeoclonium</taxon>
    </lineage>
</organism>
<dbReference type="EMBL" id="DQ630521">
    <property type="protein sequence ID" value="ABF60206.1"/>
    <property type="molecule type" value="Genomic_DNA"/>
</dbReference>
<dbReference type="RefSeq" id="YP_764368.1">
    <property type="nucleotide sequence ID" value="NC_008372.1"/>
</dbReference>
<dbReference type="SMR" id="Q06SJ8"/>
<dbReference type="GeneID" id="4308344"/>
<dbReference type="GO" id="GO:0009535">
    <property type="term" value="C:chloroplast thylakoid membrane"/>
    <property type="evidence" value="ECO:0007669"/>
    <property type="project" value="UniProtKB-SubCell"/>
</dbReference>
<dbReference type="GO" id="GO:0015979">
    <property type="term" value="P:photosynthesis"/>
    <property type="evidence" value="ECO:0007669"/>
    <property type="project" value="UniProtKB-UniRule"/>
</dbReference>
<dbReference type="Gene3D" id="1.25.40.10">
    <property type="entry name" value="Tetratricopeptide repeat domain"/>
    <property type="match status" value="1"/>
</dbReference>
<dbReference type="HAMAP" id="MF_00439">
    <property type="entry name" value="Ycf3"/>
    <property type="match status" value="1"/>
</dbReference>
<dbReference type="InterPro" id="IPR022818">
    <property type="entry name" value="PSI_Ycf3_assembly"/>
</dbReference>
<dbReference type="InterPro" id="IPR011990">
    <property type="entry name" value="TPR-like_helical_dom_sf"/>
</dbReference>
<dbReference type="InterPro" id="IPR019734">
    <property type="entry name" value="TPR_rpt"/>
</dbReference>
<dbReference type="NCBIfam" id="NF002725">
    <property type="entry name" value="PRK02603.1"/>
    <property type="match status" value="1"/>
</dbReference>
<dbReference type="Pfam" id="PF00515">
    <property type="entry name" value="TPR_1"/>
    <property type="match status" value="1"/>
</dbReference>
<dbReference type="SMART" id="SM00028">
    <property type="entry name" value="TPR"/>
    <property type="match status" value="3"/>
</dbReference>
<dbReference type="SUPFAM" id="SSF48452">
    <property type="entry name" value="TPR-like"/>
    <property type="match status" value="1"/>
</dbReference>
<dbReference type="PROSITE" id="PS50005">
    <property type="entry name" value="TPR"/>
    <property type="match status" value="3"/>
</dbReference>
<dbReference type="PROSITE" id="PS50293">
    <property type="entry name" value="TPR_REGION"/>
    <property type="match status" value="1"/>
</dbReference>
<proteinExistence type="inferred from homology"/>
<gene>
    <name evidence="1" type="primary">ycf3</name>
</gene>
<accession>Q06SJ8</accession>
<name>YCF3_STIHE</name>